<keyword id="KW-0028">Amino-acid biosynthesis</keyword>
<keyword id="KW-0055">Arginine biosynthesis</keyword>
<keyword id="KW-0067">ATP-binding</keyword>
<keyword id="KW-0963">Cytoplasm</keyword>
<keyword id="KW-0418">Kinase</keyword>
<keyword id="KW-0547">Nucleotide-binding</keyword>
<keyword id="KW-0808">Transferase</keyword>
<name>ARGB_YERPB</name>
<proteinExistence type="inferred from homology"/>
<reference key="1">
    <citation type="submission" date="2008-04" db="EMBL/GenBank/DDBJ databases">
        <title>Complete sequence of Yersinia pseudotuberculosis PB1/+.</title>
        <authorList>
            <person name="Copeland A."/>
            <person name="Lucas S."/>
            <person name="Lapidus A."/>
            <person name="Glavina del Rio T."/>
            <person name="Dalin E."/>
            <person name="Tice H."/>
            <person name="Bruce D."/>
            <person name="Goodwin L."/>
            <person name="Pitluck S."/>
            <person name="Munk A.C."/>
            <person name="Brettin T."/>
            <person name="Detter J.C."/>
            <person name="Han C."/>
            <person name="Tapia R."/>
            <person name="Schmutz J."/>
            <person name="Larimer F."/>
            <person name="Land M."/>
            <person name="Hauser L."/>
            <person name="Challacombe J.F."/>
            <person name="Green L."/>
            <person name="Lindler L.E."/>
            <person name="Nikolich M.P."/>
            <person name="Richardson P."/>
        </authorList>
    </citation>
    <scope>NUCLEOTIDE SEQUENCE [LARGE SCALE GENOMIC DNA]</scope>
    <source>
        <strain>PB1/+</strain>
    </source>
</reference>
<organism>
    <name type="scientific">Yersinia pseudotuberculosis serotype IB (strain PB1/+)</name>
    <dbReference type="NCBI Taxonomy" id="502801"/>
    <lineage>
        <taxon>Bacteria</taxon>
        <taxon>Pseudomonadati</taxon>
        <taxon>Pseudomonadota</taxon>
        <taxon>Gammaproteobacteria</taxon>
        <taxon>Enterobacterales</taxon>
        <taxon>Yersiniaceae</taxon>
        <taxon>Yersinia</taxon>
    </lineage>
</organism>
<comment type="function">
    <text evidence="1">Catalyzes the ATP-dependent phosphorylation of N-acetyl-L-glutamate.</text>
</comment>
<comment type="catalytic activity">
    <reaction evidence="1">
        <text>N-acetyl-L-glutamate + ATP = N-acetyl-L-glutamyl 5-phosphate + ADP</text>
        <dbReference type="Rhea" id="RHEA:14629"/>
        <dbReference type="ChEBI" id="CHEBI:30616"/>
        <dbReference type="ChEBI" id="CHEBI:44337"/>
        <dbReference type="ChEBI" id="CHEBI:57936"/>
        <dbReference type="ChEBI" id="CHEBI:456216"/>
        <dbReference type="EC" id="2.7.2.8"/>
    </reaction>
</comment>
<comment type="pathway">
    <text evidence="1">Amino-acid biosynthesis; L-arginine biosynthesis; N(2)-acetyl-L-ornithine from L-glutamate: step 2/4.</text>
</comment>
<comment type="subunit">
    <text evidence="1">Homodimer.</text>
</comment>
<comment type="subcellular location">
    <subcellularLocation>
        <location evidence="1">Cytoplasm</location>
    </subcellularLocation>
</comment>
<comment type="similarity">
    <text evidence="1">Belongs to the acetylglutamate kinase family. ArgB subfamily.</text>
</comment>
<protein>
    <recommendedName>
        <fullName evidence="1">Acetylglutamate kinase</fullName>
        <ecNumber evidence="1">2.7.2.8</ecNumber>
    </recommendedName>
    <alternativeName>
        <fullName evidence="1">N-acetyl-L-glutamate 5-phosphotransferase</fullName>
    </alternativeName>
    <alternativeName>
        <fullName evidence="1">NAG kinase</fullName>
        <shortName evidence="1">NAGK</shortName>
    </alternativeName>
</protein>
<feature type="chain" id="PRO_1000092894" description="Acetylglutamate kinase">
    <location>
        <begin position="1"/>
        <end position="258"/>
    </location>
</feature>
<feature type="binding site" evidence="1">
    <location>
        <begin position="44"/>
        <end position="45"/>
    </location>
    <ligand>
        <name>substrate</name>
    </ligand>
</feature>
<feature type="binding site" evidence="1">
    <location>
        <position position="66"/>
    </location>
    <ligand>
        <name>substrate</name>
    </ligand>
</feature>
<feature type="binding site" evidence="1">
    <location>
        <position position="158"/>
    </location>
    <ligand>
        <name>substrate</name>
    </ligand>
</feature>
<feature type="binding site" evidence="1">
    <location>
        <begin position="181"/>
        <end position="186"/>
    </location>
    <ligand>
        <name>ATP</name>
        <dbReference type="ChEBI" id="CHEBI:30616"/>
    </ligand>
</feature>
<feature type="binding site" evidence="1">
    <location>
        <begin position="209"/>
        <end position="211"/>
    </location>
    <ligand>
        <name>ATP</name>
        <dbReference type="ChEBI" id="CHEBI:30616"/>
    </ligand>
</feature>
<feature type="site" description="Transition state stabilizer" evidence="1">
    <location>
        <position position="8"/>
    </location>
</feature>
<feature type="site" description="Transition state stabilizer" evidence="1">
    <location>
        <position position="217"/>
    </location>
</feature>
<gene>
    <name evidence="1" type="primary">argB</name>
    <name type="ordered locus">YPTS_0117</name>
</gene>
<sequence length="258" mass="26987">MMNPLVIKLGGVLLDSEEALERLFTALVTYREKHERPLVIMHGGGCLVDELMKRLALPVVKKNGLRVTPADQIDIITGALAGTANKTLLAWAVKHQINAVGLCLADGNTVTVTLLDAELGHVGKAQPGSAALVQTLLAAGYMPIISSIGITVEGQLMNVNADQAATALAATLGADLILLSDVSGILDGKGQRIAEMTAQKAEQLIAQGIITDGMVVKVNAALDAARSLGRPVDIASWRHSEQLPALFNGVPIGTRISV</sequence>
<dbReference type="EC" id="2.7.2.8" evidence="1"/>
<dbReference type="EMBL" id="CP001048">
    <property type="protein sequence ID" value="ACC87116.1"/>
    <property type="molecule type" value="Genomic_DNA"/>
</dbReference>
<dbReference type="SMR" id="B2JZE3"/>
<dbReference type="KEGG" id="ypb:YPTS_0117"/>
<dbReference type="UniPathway" id="UPA00068">
    <property type="reaction ID" value="UER00107"/>
</dbReference>
<dbReference type="GO" id="GO:0005737">
    <property type="term" value="C:cytoplasm"/>
    <property type="evidence" value="ECO:0007669"/>
    <property type="project" value="UniProtKB-SubCell"/>
</dbReference>
<dbReference type="GO" id="GO:0003991">
    <property type="term" value="F:acetylglutamate kinase activity"/>
    <property type="evidence" value="ECO:0007669"/>
    <property type="project" value="UniProtKB-UniRule"/>
</dbReference>
<dbReference type="GO" id="GO:0005524">
    <property type="term" value="F:ATP binding"/>
    <property type="evidence" value="ECO:0007669"/>
    <property type="project" value="UniProtKB-UniRule"/>
</dbReference>
<dbReference type="GO" id="GO:0042450">
    <property type="term" value="P:arginine biosynthetic process via ornithine"/>
    <property type="evidence" value="ECO:0007669"/>
    <property type="project" value="UniProtKB-UniRule"/>
</dbReference>
<dbReference type="GO" id="GO:0006526">
    <property type="term" value="P:L-arginine biosynthetic process"/>
    <property type="evidence" value="ECO:0007669"/>
    <property type="project" value="UniProtKB-UniPathway"/>
</dbReference>
<dbReference type="CDD" id="cd04249">
    <property type="entry name" value="AAK_NAGK-NC"/>
    <property type="match status" value="1"/>
</dbReference>
<dbReference type="FunFam" id="3.40.1160.10:FF:000008">
    <property type="entry name" value="Acetylglutamate kinase"/>
    <property type="match status" value="1"/>
</dbReference>
<dbReference type="Gene3D" id="3.40.1160.10">
    <property type="entry name" value="Acetylglutamate kinase-like"/>
    <property type="match status" value="1"/>
</dbReference>
<dbReference type="HAMAP" id="MF_00082">
    <property type="entry name" value="ArgB"/>
    <property type="match status" value="1"/>
</dbReference>
<dbReference type="InterPro" id="IPR036393">
    <property type="entry name" value="AceGlu_kinase-like_sf"/>
</dbReference>
<dbReference type="InterPro" id="IPR004662">
    <property type="entry name" value="AcgluKinase_fam"/>
</dbReference>
<dbReference type="InterPro" id="IPR037528">
    <property type="entry name" value="ArgB"/>
</dbReference>
<dbReference type="InterPro" id="IPR001048">
    <property type="entry name" value="Asp/Glu/Uridylate_kinase"/>
</dbReference>
<dbReference type="InterPro" id="IPR041731">
    <property type="entry name" value="NAGK-NC"/>
</dbReference>
<dbReference type="NCBIfam" id="TIGR00761">
    <property type="entry name" value="argB"/>
    <property type="match status" value="1"/>
</dbReference>
<dbReference type="PANTHER" id="PTHR23342">
    <property type="entry name" value="N-ACETYLGLUTAMATE SYNTHASE"/>
    <property type="match status" value="1"/>
</dbReference>
<dbReference type="PANTHER" id="PTHR23342:SF0">
    <property type="entry name" value="N-ACETYLGLUTAMATE SYNTHASE, MITOCHONDRIAL"/>
    <property type="match status" value="1"/>
</dbReference>
<dbReference type="Pfam" id="PF00696">
    <property type="entry name" value="AA_kinase"/>
    <property type="match status" value="1"/>
</dbReference>
<dbReference type="PIRSF" id="PIRSF000728">
    <property type="entry name" value="NAGK"/>
    <property type="match status" value="1"/>
</dbReference>
<dbReference type="SUPFAM" id="SSF53633">
    <property type="entry name" value="Carbamate kinase-like"/>
    <property type="match status" value="1"/>
</dbReference>
<accession>B2JZE3</accession>
<evidence type="ECO:0000255" key="1">
    <source>
        <dbReference type="HAMAP-Rule" id="MF_00082"/>
    </source>
</evidence>